<protein>
    <recommendedName>
        <fullName>Cysteine-rich venom protein 2</fullName>
        <shortName>CRVP</shortName>
    </recommendedName>
</protein>
<comment type="function">
    <text evidence="1">Blocks contraction of smooth muscle elicited by high potassium-induced depolarization, but does not block caffeine-stimulated contraction. May target voltage-gated calcium channels (Cav) on smooth muscle (By similarity).</text>
</comment>
<comment type="subcellular location">
    <subcellularLocation>
        <location>Secreted</location>
    </subcellularLocation>
</comment>
<comment type="tissue specificity">
    <text>Expressed by the venom gland.</text>
</comment>
<comment type="similarity">
    <text evidence="4">Belongs to the CRISP family.</text>
</comment>
<comment type="sequence caution" evidence="4">
    <conflict type="erroneous initiation">
        <sequence resource="EMBL-CDS" id="AAL54918"/>
    </conflict>
    <text>Truncated N-terminus.</text>
</comment>
<sequence length="238" mass="26482">MIAFIVLLSLAAVLQQSSGTVDFASESSNKKDYQREIVDKHNALRRSVKPTARNMLQMKWNSHAAQNAKRSADRCTFAHSPEHTRTVGKFRCGENIFMSSQPFAWSGVVQAWYDEIKNFVYGIGAKPPGSVIGHYTQIVWYKSHLLGCASAKCSSTKYLYVCQYCPAGNIRSSIATPYKSGPSCGDCPSACVNGLCTNPCEYEDAYTNCNDLVKERKCQTEWIKSQCPATCFCHNKII</sequence>
<feature type="signal peptide" evidence="2">
    <location>
        <begin position="1"/>
        <end position="19"/>
    </location>
</feature>
<feature type="chain" id="PRO_0000006277" description="Cysteine-rich venom protein 2">
    <location>
        <begin position="20"/>
        <end position="238"/>
    </location>
</feature>
<feature type="domain" description="SCP">
    <location>
        <begin position="38"/>
        <end position="164"/>
    </location>
</feature>
<feature type="domain" description="ShKT" evidence="3">
    <location>
        <begin position="200"/>
        <end position="233"/>
    </location>
</feature>
<feature type="disulfide bond" evidence="3">
    <location>
        <begin position="75"/>
        <end position="153"/>
    </location>
</feature>
<feature type="disulfide bond" evidence="3">
    <location>
        <begin position="92"/>
        <end position="165"/>
    </location>
</feature>
<feature type="disulfide bond" evidence="3">
    <location>
        <begin position="148"/>
        <end position="162"/>
    </location>
</feature>
<feature type="disulfide bond" evidence="3">
    <location>
        <begin position="184"/>
        <end position="191"/>
    </location>
</feature>
<feature type="disulfide bond" evidence="3">
    <location>
        <begin position="187"/>
        <end position="196"/>
    </location>
</feature>
<feature type="disulfide bond" evidence="3">
    <location>
        <begin position="200"/>
        <end position="233"/>
    </location>
</feature>
<feature type="disulfide bond" evidence="3">
    <location>
        <begin position="209"/>
        <end position="227"/>
    </location>
</feature>
<feature type="disulfide bond" evidence="3">
    <location>
        <begin position="218"/>
        <end position="231"/>
    </location>
</feature>
<organism>
    <name type="scientific">Hydrophis hardwickii</name>
    <name type="common">Hardwick's spine-bellied seasnake</name>
    <name type="synonym">Lapemis hardwickii</name>
    <dbReference type="NCBI Taxonomy" id="8781"/>
    <lineage>
        <taxon>Eukaryota</taxon>
        <taxon>Metazoa</taxon>
        <taxon>Chordata</taxon>
        <taxon>Craniata</taxon>
        <taxon>Vertebrata</taxon>
        <taxon>Euteleostomi</taxon>
        <taxon>Lepidosauria</taxon>
        <taxon>Squamata</taxon>
        <taxon>Bifurcata</taxon>
        <taxon>Unidentata</taxon>
        <taxon>Episquamata</taxon>
        <taxon>Toxicofera</taxon>
        <taxon>Serpentes</taxon>
        <taxon>Colubroidea</taxon>
        <taxon>Elapidae</taxon>
        <taxon>Hydrophiinae</taxon>
        <taxon>Hydrophis</taxon>
    </lineage>
</organism>
<keyword id="KW-0108">Calcium channel impairing toxin</keyword>
<keyword id="KW-1015">Disulfide bond</keyword>
<keyword id="KW-0872">Ion channel impairing toxin</keyword>
<keyword id="KW-0528">Neurotoxin</keyword>
<keyword id="KW-0964">Secreted</keyword>
<keyword id="KW-0732">Signal</keyword>
<keyword id="KW-0800">Toxin</keyword>
<keyword id="KW-1218">Voltage-gated calcium channel impairing toxin</keyword>
<accession>Q8UW11</accession>
<proteinExistence type="evidence at transcript level"/>
<dbReference type="EMBL" id="AF190861">
    <property type="protein sequence ID" value="AAL54918.1"/>
    <property type="status" value="ALT_INIT"/>
    <property type="molecule type" value="mRNA"/>
</dbReference>
<dbReference type="SMR" id="Q8UW11"/>
<dbReference type="GO" id="GO:0005576">
    <property type="term" value="C:extracellular region"/>
    <property type="evidence" value="ECO:0007669"/>
    <property type="project" value="UniProtKB-SubCell"/>
</dbReference>
<dbReference type="GO" id="GO:0005246">
    <property type="term" value="F:calcium channel regulator activity"/>
    <property type="evidence" value="ECO:0007669"/>
    <property type="project" value="UniProtKB-KW"/>
</dbReference>
<dbReference type="GO" id="GO:0090729">
    <property type="term" value="F:toxin activity"/>
    <property type="evidence" value="ECO:0007669"/>
    <property type="project" value="UniProtKB-KW"/>
</dbReference>
<dbReference type="CDD" id="cd05383">
    <property type="entry name" value="CAP_CRISP"/>
    <property type="match status" value="1"/>
</dbReference>
<dbReference type="FunFam" id="1.10.10.740:FF:000001">
    <property type="entry name" value="Cysteine-rich secretory protein 2"/>
    <property type="match status" value="1"/>
</dbReference>
<dbReference type="FunFam" id="3.40.33.10:FF:000005">
    <property type="entry name" value="Cysteine-rich secretory protein 2"/>
    <property type="match status" value="1"/>
</dbReference>
<dbReference type="Gene3D" id="3.40.33.10">
    <property type="entry name" value="CAP"/>
    <property type="match status" value="1"/>
</dbReference>
<dbReference type="Gene3D" id="1.10.10.740">
    <property type="entry name" value="Crisp domain"/>
    <property type="match status" value="1"/>
</dbReference>
<dbReference type="InterPro" id="IPR018244">
    <property type="entry name" value="Allrgn_V5/Tpx1_CS"/>
</dbReference>
<dbReference type="InterPro" id="IPR014044">
    <property type="entry name" value="CAP_dom"/>
</dbReference>
<dbReference type="InterPro" id="IPR035940">
    <property type="entry name" value="CAP_sf"/>
</dbReference>
<dbReference type="InterPro" id="IPR042076">
    <property type="entry name" value="Crisp-like_dom"/>
</dbReference>
<dbReference type="InterPro" id="IPR001283">
    <property type="entry name" value="CRISP-related"/>
</dbReference>
<dbReference type="InterPro" id="IPR013871">
    <property type="entry name" value="Cysteine_rich_secretory"/>
</dbReference>
<dbReference type="InterPro" id="IPR034117">
    <property type="entry name" value="SCP_CRISP"/>
</dbReference>
<dbReference type="InterPro" id="IPR003582">
    <property type="entry name" value="ShKT_dom"/>
</dbReference>
<dbReference type="PANTHER" id="PTHR10334">
    <property type="entry name" value="CYSTEINE-RICH SECRETORY PROTEIN-RELATED"/>
    <property type="match status" value="1"/>
</dbReference>
<dbReference type="Pfam" id="PF00188">
    <property type="entry name" value="CAP"/>
    <property type="match status" value="1"/>
</dbReference>
<dbReference type="Pfam" id="PF08562">
    <property type="entry name" value="Crisp"/>
    <property type="match status" value="1"/>
</dbReference>
<dbReference type="PRINTS" id="PR00837">
    <property type="entry name" value="V5TPXLIKE"/>
</dbReference>
<dbReference type="SMART" id="SM00198">
    <property type="entry name" value="SCP"/>
    <property type="match status" value="1"/>
</dbReference>
<dbReference type="SUPFAM" id="SSF57546">
    <property type="entry name" value="Crisp domain-like"/>
    <property type="match status" value="1"/>
</dbReference>
<dbReference type="SUPFAM" id="SSF55797">
    <property type="entry name" value="PR-1-like"/>
    <property type="match status" value="1"/>
</dbReference>
<dbReference type="PROSITE" id="PS01009">
    <property type="entry name" value="CRISP_1"/>
    <property type="match status" value="1"/>
</dbReference>
<dbReference type="PROSITE" id="PS01010">
    <property type="entry name" value="CRISP_2"/>
    <property type="match status" value="1"/>
</dbReference>
<dbReference type="PROSITE" id="PS51670">
    <property type="entry name" value="SHKT"/>
    <property type="match status" value="1"/>
</dbReference>
<evidence type="ECO:0000250" key="1"/>
<evidence type="ECO:0000255" key="2"/>
<evidence type="ECO:0000255" key="3">
    <source>
        <dbReference type="PROSITE-ProRule" id="PRU01005"/>
    </source>
</evidence>
<evidence type="ECO:0000305" key="4"/>
<reference key="1">
    <citation type="submission" date="1999-09" db="EMBL/GenBank/DDBJ databases">
        <title>A novel cysteine-rich venom protein cDNA from sea snake.</title>
        <authorList>
            <person name="Wei J."/>
            <person name="Zhong X."/>
            <person name="Yang W."/>
            <person name="Zhao G."/>
            <person name="Xu A."/>
        </authorList>
    </citation>
    <scope>NUCLEOTIDE SEQUENCE [MRNA]</scope>
    <source>
        <tissue>Venom gland</tissue>
    </source>
</reference>
<name>CRVP2_HYDHA</name>